<dbReference type="EMBL" id="D83331">
    <property type="protein sequence ID" value="BAA11887.1"/>
    <property type="molecule type" value="mRNA"/>
</dbReference>
<dbReference type="EMBL" id="AB046491">
    <property type="protein sequence ID" value="BAB21452.1"/>
    <property type="molecule type" value="mRNA"/>
</dbReference>
<dbReference type="PIR" id="JC4690">
    <property type="entry name" value="JC4690"/>
</dbReference>
<dbReference type="PDB" id="1IXX">
    <property type="method" value="X-ray"/>
    <property type="resolution" value="2.50 A"/>
    <property type="chains" value="A/C/E=24-152"/>
</dbReference>
<dbReference type="PDBsum" id="1IXX"/>
<dbReference type="SMR" id="P23806"/>
<dbReference type="EvolutionaryTrace" id="P23806"/>
<dbReference type="GO" id="GO:0005576">
    <property type="term" value="C:extracellular region"/>
    <property type="evidence" value="ECO:0007669"/>
    <property type="project" value="UniProtKB-SubCell"/>
</dbReference>
<dbReference type="GO" id="GO:0046872">
    <property type="term" value="F:metal ion binding"/>
    <property type="evidence" value="ECO:0007669"/>
    <property type="project" value="UniProtKB-KW"/>
</dbReference>
<dbReference type="GO" id="GO:0090729">
    <property type="term" value="F:toxin activity"/>
    <property type="evidence" value="ECO:0007669"/>
    <property type="project" value="UniProtKB-KW"/>
</dbReference>
<dbReference type="FunFam" id="3.10.100.10:FF:000087">
    <property type="entry name" value="Snaclec rhodocetin subunit delta"/>
    <property type="match status" value="1"/>
</dbReference>
<dbReference type="Gene3D" id="3.10.100.10">
    <property type="entry name" value="Mannose-Binding Protein A, subunit A"/>
    <property type="match status" value="1"/>
</dbReference>
<dbReference type="InterPro" id="IPR001304">
    <property type="entry name" value="C-type_lectin-like"/>
</dbReference>
<dbReference type="InterPro" id="IPR016186">
    <property type="entry name" value="C-type_lectin-like/link_sf"/>
</dbReference>
<dbReference type="InterPro" id="IPR050111">
    <property type="entry name" value="C-type_lectin/snaclec_domain"/>
</dbReference>
<dbReference type="InterPro" id="IPR018378">
    <property type="entry name" value="C-type_lectin_CS"/>
</dbReference>
<dbReference type="InterPro" id="IPR016187">
    <property type="entry name" value="CTDL_fold"/>
</dbReference>
<dbReference type="PANTHER" id="PTHR22803">
    <property type="entry name" value="MANNOSE, PHOSPHOLIPASE, LECTIN RECEPTOR RELATED"/>
    <property type="match status" value="1"/>
</dbReference>
<dbReference type="Pfam" id="PF00059">
    <property type="entry name" value="Lectin_C"/>
    <property type="match status" value="1"/>
</dbReference>
<dbReference type="PRINTS" id="PR01504">
    <property type="entry name" value="PNCREATITSAP"/>
</dbReference>
<dbReference type="SMART" id="SM00034">
    <property type="entry name" value="CLECT"/>
    <property type="match status" value="1"/>
</dbReference>
<dbReference type="SUPFAM" id="SSF56436">
    <property type="entry name" value="C-type lectin-like"/>
    <property type="match status" value="1"/>
</dbReference>
<dbReference type="PROSITE" id="PS00615">
    <property type="entry name" value="C_TYPE_LECTIN_1"/>
    <property type="match status" value="1"/>
</dbReference>
<dbReference type="PROSITE" id="PS50041">
    <property type="entry name" value="C_TYPE_LECTIN_2"/>
    <property type="match status" value="1"/>
</dbReference>
<comment type="function">
    <text evidence="3 4">Anticoagulant protein which binds to the gamma-carboxyglutamic acid-domain regions of factors IX (F9) and factor X (F10) in the presence of calcium with a 1 to 1 stoichiometry.</text>
</comment>
<comment type="subunit">
    <text evidence="5">Heterodimer of subunits A and B; disulfide-linked.</text>
</comment>
<comment type="subcellular location">
    <subcellularLocation>
        <location>Secreted</location>
    </subcellularLocation>
</comment>
<comment type="tissue specificity">
    <text>Expressed by the venom gland.</text>
</comment>
<comment type="miscellaneous">
    <text>Calcium is required for ligand binding.</text>
</comment>
<comment type="similarity">
    <text evidence="6">Belongs to the snaclec family.</text>
</comment>
<reference key="1">
    <citation type="journal article" date="1996" name="Biochem. Biophys. Res. Commun.">
        <title>cDNA cloning of IX/X-BP, a heterogeneous two-chain anticoagulant protein from snake venom.</title>
        <authorList>
            <person name="Matsuzaki R."/>
            <person name="Yoshihara E."/>
            <person name="Yamada M."/>
            <person name="Shima K."/>
            <person name="Atoda H."/>
            <person name="Morita T."/>
        </authorList>
    </citation>
    <scope>NUCLEOTIDE SEQUENCE [MRNA]</scope>
    <source>
        <tissue>Venom gland</tissue>
    </source>
</reference>
<reference key="2">
    <citation type="journal article" date="2002" name="Toxicon">
        <title>Characterization, primary structure and molecular evolution of anticoagulant protein from Agkistrodon actus venom.</title>
        <authorList>
            <person name="Tani A."/>
            <person name="Ogawa T."/>
            <person name="Nose T."/>
            <person name="Nikandrov N.N."/>
            <person name="Deshimaru M."/>
            <person name="Chijiwa T."/>
            <person name="Chang C.C."/>
            <person name="Fukumaki Y."/>
            <person name="Ohno M."/>
        </authorList>
    </citation>
    <scope>NUCLEOTIDE SEQUENCE [MRNA] OF 7-152</scope>
    <source>
        <tissue>Venom gland</tissue>
    </source>
</reference>
<reference key="3">
    <citation type="journal article" date="1991" name="J. Biol. Chem.">
        <title>The primary structure of coagulation factor IX/factor X-binding protein isolated from the venom of Trimeresurus flavoviridis. Homology with asialoglycoprotein receptors, proteoglycan core protein, tetranectin, and lymphocyte Fc epsilon receptor for immunoglobulin E.</title>
        <authorList>
            <person name="Atoda H."/>
            <person name="Hyuga M."/>
            <person name="Morita T."/>
        </authorList>
    </citation>
    <scope>PROTEIN SEQUENCE OF 24-152</scope>
    <source>
        <tissue>Venom</tissue>
    </source>
</reference>
<reference key="4">
    <citation type="journal article" date="1989" name="J. Biochem.">
        <title>A novel blood coagulation factor IX/factor X-binding protein with anticoagulant activity from the venom of Trimeresurus flavoviridis (Habu snake): isolation and characterization.</title>
        <authorList>
            <person name="Atoda H."/>
            <person name="Morita T."/>
        </authorList>
    </citation>
    <scope>FUNCTION</scope>
</reference>
<reference key="5">
    <citation type="journal article" date="1994" name="Eur. J. Biochem.">
        <title>Binding properties of the coagulation factor IX/factor X-binding protein isolated from the venom of Trimeresurus flavoviridis.</title>
        <authorList>
            <person name="Atoda H."/>
            <person name="Yoshida N."/>
            <person name="Ishikawa M."/>
            <person name="Morita T."/>
        </authorList>
    </citation>
    <scope>FUNCTION</scope>
</reference>
<reference key="6">
    <citation type="journal article" date="1997" name="Nat. Struct. Biol.">
        <title>Structure of coagulation factors IX/X-binding protein, a heterodimer of C-type lectin domains.</title>
        <authorList>
            <person name="Mizuno H."/>
            <person name="Fujimoto Z."/>
            <person name="Koizumi M."/>
            <person name="Kano H."/>
            <person name="Atoda H."/>
            <person name="Morita T."/>
        </authorList>
    </citation>
    <scope>X-RAY CRYSTALLOGRAPHY (2.5 ANGSTROMS) OF 24-152</scope>
    <scope>METAL-BINDING SITES</scope>
    <scope>DISULFIDE BONDS</scope>
</reference>
<sequence>MGRFIFMSFGLLVVAASLRGTGADCLSGWSSYEGHCYKAFEKYKTWEDAERVCTEQAKGAHLVSIESSGEADFVAQLVTQNMKRLDFYIWIGLRVQGKVKQCNSEWSDGSSVSYENWIEAESKTCLGLEKETDFRKWVNIYCGQQNPFVCEA</sequence>
<keyword id="KW-0002">3D-structure</keyword>
<keyword id="KW-1203">Blood coagulation cascade inhibiting toxin</keyword>
<keyword id="KW-0106">Calcium</keyword>
<keyword id="KW-0903">Direct protein sequencing</keyword>
<keyword id="KW-1015">Disulfide bond</keyword>
<keyword id="KW-1199">Hemostasis impairing toxin</keyword>
<keyword id="KW-0479">Metal-binding</keyword>
<keyword id="KW-0964">Secreted</keyword>
<keyword id="KW-0732">Signal</keyword>
<keyword id="KW-0800">Toxin</keyword>
<name>SL9A_PROFL</name>
<feature type="signal peptide" evidence="2">
    <location>
        <begin position="1"/>
        <end position="23"/>
    </location>
</feature>
<feature type="chain" id="PRO_0000017530" description="Snaclec coagulation factor IX/factor X-binding protein subunit A">
    <location>
        <begin position="24"/>
        <end position="152"/>
    </location>
</feature>
<feature type="domain" description="C-type lectin" evidence="1">
    <location>
        <begin position="24"/>
        <end position="152"/>
    </location>
</feature>
<feature type="binding site">
    <location>
        <position position="64"/>
    </location>
    <ligand>
        <name>Ca(2+)</name>
        <dbReference type="ChEBI" id="CHEBI:29108"/>
    </ligand>
</feature>
<feature type="binding site">
    <location>
        <position position="66"/>
    </location>
    <ligand>
        <name>Ca(2+)</name>
        <dbReference type="ChEBI" id="CHEBI:29108"/>
    </ligand>
</feature>
<feature type="binding site">
    <location>
        <position position="70"/>
    </location>
    <ligand>
        <name>Ca(2+)</name>
        <dbReference type="ChEBI" id="CHEBI:29108"/>
    </ligand>
</feature>
<feature type="binding site">
    <location>
        <position position="151"/>
    </location>
    <ligand>
        <name>Ca(2+)</name>
        <dbReference type="ChEBI" id="CHEBI:29108"/>
    </ligand>
</feature>
<feature type="disulfide bond" evidence="1 5">
    <location>
        <begin position="25"/>
        <end position="36"/>
    </location>
</feature>
<feature type="disulfide bond" evidence="1 5">
    <location>
        <begin position="53"/>
        <end position="150"/>
    </location>
</feature>
<feature type="disulfide bond" description="Interchain (with C-98 in subunit B)" evidence="1 5">
    <location>
        <position position="102"/>
    </location>
</feature>
<feature type="disulfide bond" evidence="1 5">
    <location>
        <begin position="125"/>
        <end position="142"/>
    </location>
</feature>
<feature type="strand" evidence="7">
    <location>
        <begin position="36"/>
        <end position="44"/>
    </location>
</feature>
<feature type="helix" evidence="7">
    <location>
        <begin position="46"/>
        <end position="56"/>
    </location>
</feature>
<feature type="helix" evidence="7">
    <location>
        <begin position="68"/>
        <end position="81"/>
    </location>
</feature>
<feature type="strand" evidence="7">
    <location>
        <begin position="89"/>
        <end position="95"/>
    </location>
</feature>
<feature type="helix" evidence="7">
    <location>
        <begin position="119"/>
        <end position="121"/>
    </location>
</feature>
<feature type="strand" evidence="7">
    <location>
        <begin position="125"/>
        <end position="128"/>
    </location>
</feature>
<feature type="helix" evidence="7">
    <location>
        <begin position="130"/>
        <end position="132"/>
    </location>
</feature>
<feature type="strand" evidence="7">
    <location>
        <begin position="136"/>
        <end position="140"/>
    </location>
</feature>
<feature type="strand" evidence="7">
    <location>
        <begin position="146"/>
        <end position="151"/>
    </location>
</feature>
<accession>P23806</accession>
<accession>Q91246</accession>
<accession>Q98UJ0</accession>
<proteinExistence type="evidence at protein level"/>
<evidence type="ECO:0000255" key="1">
    <source>
        <dbReference type="PROSITE-ProRule" id="PRU00040"/>
    </source>
</evidence>
<evidence type="ECO:0000269" key="2">
    <source>
    </source>
</evidence>
<evidence type="ECO:0000269" key="3">
    <source>
    </source>
</evidence>
<evidence type="ECO:0000269" key="4">
    <source>
    </source>
</evidence>
<evidence type="ECO:0000269" key="5">
    <source>
    </source>
</evidence>
<evidence type="ECO:0000305" key="6"/>
<evidence type="ECO:0007829" key="7">
    <source>
        <dbReference type="PDB" id="1IXX"/>
    </source>
</evidence>
<protein>
    <recommendedName>
        <fullName>Snaclec coagulation factor IX/factor X-binding protein subunit A</fullName>
        <shortName>IX/X-bp subunit A</shortName>
    </recommendedName>
</protein>
<organism>
    <name type="scientific">Protobothrops flavoviridis</name>
    <name type="common">Habu</name>
    <name type="synonym">Trimeresurus flavoviridis</name>
    <dbReference type="NCBI Taxonomy" id="88087"/>
    <lineage>
        <taxon>Eukaryota</taxon>
        <taxon>Metazoa</taxon>
        <taxon>Chordata</taxon>
        <taxon>Craniata</taxon>
        <taxon>Vertebrata</taxon>
        <taxon>Euteleostomi</taxon>
        <taxon>Lepidosauria</taxon>
        <taxon>Squamata</taxon>
        <taxon>Bifurcata</taxon>
        <taxon>Unidentata</taxon>
        <taxon>Episquamata</taxon>
        <taxon>Toxicofera</taxon>
        <taxon>Serpentes</taxon>
        <taxon>Colubroidea</taxon>
        <taxon>Viperidae</taxon>
        <taxon>Crotalinae</taxon>
        <taxon>Protobothrops</taxon>
    </lineage>
</organism>